<organism>
    <name type="scientific">Saccharolobus islandicus (strain Y.N.15.51 / Yellowstone #2)</name>
    <name type="common">Sulfolobus islandicus</name>
    <dbReference type="NCBI Taxonomy" id="419942"/>
    <lineage>
        <taxon>Archaea</taxon>
        <taxon>Thermoproteota</taxon>
        <taxon>Thermoprotei</taxon>
        <taxon>Sulfolobales</taxon>
        <taxon>Sulfolobaceae</taxon>
        <taxon>Saccharolobus</taxon>
    </lineage>
</organism>
<gene>
    <name evidence="1" type="primary">rpl40e</name>
    <name type="ordered locus">YN1551_0830</name>
</gene>
<accession>C3NF56</accession>
<evidence type="ECO:0000255" key="1">
    <source>
        <dbReference type="HAMAP-Rule" id="MF_00788"/>
    </source>
</evidence>
<evidence type="ECO:0000305" key="2"/>
<sequence>MPLTDPAKLQIVQQRVFLKKVCRKCGALNPIRATKCRRCHSTNLRLKKKELPTKKG</sequence>
<comment type="similarity">
    <text evidence="1">Belongs to the eukaryotic ribosomal protein eL40 family.</text>
</comment>
<keyword id="KW-0687">Ribonucleoprotein</keyword>
<keyword id="KW-0689">Ribosomal protein</keyword>
<proteinExistence type="inferred from homology"/>
<name>RL40_SACI1</name>
<protein>
    <recommendedName>
        <fullName evidence="1">Large ribosomal subunit protein eL40</fullName>
    </recommendedName>
    <alternativeName>
        <fullName evidence="2">50S ribosomal protein L40e</fullName>
    </alternativeName>
</protein>
<reference key="1">
    <citation type="journal article" date="2009" name="Proc. Natl. Acad. Sci. U.S.A.">
        <title>Biogeography of the Sulfolobus islandicus pan-genome.</title>
        <authorList>
            <person name="Reno M.L."/>
            <person name="Held N.L."/>
            <person name="Fields C.J."/>
            <person name="Burke P.V."/>
            <person name="Whitaker R.J."/>
        </authorList>
    </citation>
    <scope>NUCLEOTIDE SEQUENCE [LARGE SCALE GENOMIC DNA]</scope>
    <source>
        <strain>Y.N.15.51 / Yellowstone #2</strain>
    </source>
</reference>
<feature type="chain" id="PRO_1000212952" description="Large ribosomal subunit protein eL40">
    <location>
        <begin position="1"/>
        <end position="56"/>
    </location>
</feature>
<dbReference type="EMBL" id="CP001404">
    <property type="protein sequence ID" value="ACP47952.1"/>
    <property type="molecule type" value="Genomic_DNA"/>
</dbReference>
<dbReference type="SMR" id="C3NF56"/>
<dbReference type="KEGG" id="sin:YN1551_0830"/>
<dbReference type="HOGENOM" id="CLU_175093_1_0_2"/>
<dbReference type="Proteomes" id="UP000006818">
    <property type="component" value="Chromosome"/>
</dbReference>
<dbReference type="GO" id="GO:1990904">
    <property type="term" value="C:ribonucleoprotein complex"/>
    <property type="evidence" value="ECO:0007669"/>
    <property type="project" value="UniProtKB-KW"/>
</dbReference>
<dbReference type="GO" id="GO:0005840">
    <property type="term" value="C:ribosome"/>
    <property type="evidence" value="ECO:0007669"/>
    <property type="project" value="UniProtKB-KW"/>
</dbReference>
<dbReference type="GO" id="GO:0003735">
    <property type="term" value="F:structural constituent of ribosome"/>
    <property type="evidence" value="ECO:0007669"/>
    <property type="project" value="InterPro"/>
</dbReference>
<dbReference type="GO" id="GO:0006412">
    <property type="term" value="P:translation"/>
    <property type="evidence" value="ECO:0007669"/>
    <property type="project" value="UniProtKB-UniRule"/>
</dbReference>
<dbReference type="Gene3D" id="4.10.1060.50">
    <property type="match status" value="1"/>
</dbReference>
<dbReference type="HAMAP" id="MF_00788">
    <property type="entry name" value="Ribosomal_eL40"/>
    <property type="match status" value="1"/>
</dbReference>
<dbReference type="InterPro" id="IPR023657">
    <property type="entry name" value="Ribosomal_eL40_arc"/>
</dbReference>
<dbReference type="InterPro" id="IPR001975">
    <property type="entry name" value="Ribosomal_eL40_dom"/>
</dbReference>
<dbReference type="InterPro" id="IPR038587">
    <property type="entry name" value="Ribosomal_eL40_sf"/>
</dbReference>
<dbReference type="InterPro" id="IPR011332">
    <property type="entry name" value="Ribosomal_zn-bd"/>
</dbReference>
<dbReference type="NCBIfam" id="NF003161">
    <property type="entry name" value="PRK04136.1"/>
    <property type="match status" value="1"/>
</dbReference>
<dbReference type="PANTHER" id="PTHR39649">
    <property type="entry name" value="50S RIBOSOMAL PROTEIN L40E"/>
    <property type="match status" value="1"/>
</dbReference>
<dbReference type="PANTHER" id="PTHR39649:SF1">
    <property type="entry name" value="LARGE RIBOSOMAL SUBUNIT PROTEIN EL40"/>
    <property type="match status" value="1"/>
</dbReference>
<dbReference type="Pfam" id="PF01020">
    <property type="entry name" value="Ribosomal_L40e"/>
    <property type="match status" value="1"/>
</dbReference>
<dbReference type="SMART" id="SM01377">
    <property type="entry name" value="Ribosomal_L40e"/>
    <property type="match status" value="1"/>
</dbReference>
<dbReference type="SUPFAM" id="SSF57829">
    <property type="entry name" value="Zn-binding ribosomal proteins"/>
    <property type="match status" value="1"/>
</dbReference>